<gene>
    <name evidence="1" type="primary">cysZ</name>
    <name type="ordered locus">SDY_2610</name>
</gene>
<sequence>MVSSFTSAPRSGFYYFAQGWKLVSQPRIRRFVILPLLVNILLMGGAFWWLFTQLDVWIPTLMSYVPDWLQWLSYLLWPLAVISVLLVFGYFFSTIANWIAAPFNGLLAEQLEARLTGATPPDTGIFGIMKDVPRIMKREWQKFAWYLPRAIVLLILYFIPGIGQTVAPVLWFLFSAWMLAIQYCDYPFDNHKVPFKEMRTALRTRKITNMQFGALTSLFTMIPLLNLFIMPVAVCGATAMWVDCYRDKHAMWR</sequence>
<organism>
    <name type="scientific">Shigella dysenteriae serotype 1 (strain Sd197)</name>
    <dbReference type="NCBI Taxonomy" id="300267"/>
    <lineage>
        <taxon>Bacteria</taxon>
        <taxon>Pseudomonadati</taxon>
        <taxon>Pseudomonadota</taxon>
        <taxon>Gammaproteobacteria</taxon>
        <taxon>Enterobacterales</taxon>
        <taxon>Enterobacteriaceae</taxon>
        <taxon>Shigella</taxon>
    </lineage>
</organism>
<dbReference type="EMBL" id="CP000034">
    <property type="protein sequence ID" value="ABB62665.1"/>
    <property type="molecule type" value="Genomic_DNA"/>
</dbReference>
<dbReference type="RefSeq" id="WP_000254849.1">
    <property type="nucleotide sequence ID" value="NC_007606.1"/>
</dbReference>
<dbReference type="RefSeq" id="YP_404156.1">
    <property type="nucleotide sequence ID" value="NC_007606.1"/>
</dbReference>
<dbReference type="SMR" id="Q32DE0"/>
<dbReference type="STRING" id="300267.SDY_2610"/>
<dbReference type="EnsemblBacteria" id="ABB62665">
    <property type="protein sequence ID" value="ABB62665"/>
    <property type="gene ID" value="SDY_2610"/>
</dbReference>
<dbReference type="KEGG" id="sdy:SDY_2610"/>
<dbReference type="PATRIC" id="fig|300267.13.peg.3147"/>
<dbReference type="HOGENOM" id="CLU_070331_1_0_6"/>
<dbReference type="Proteomes" id="UP000002716">
    <property type="component" value="Chromosome"/>
</dbReference>
<dbReference type="GO" id="GO:0005886">
    <property type="term" value="C:plasma membrane"/>
    <property type="evidence" value="ECO:0007669"/>
    <property type="project" value="UniProtKB-SubCell"/>
</dbReference>
<dbReference type="GO" id="GO:0009675">
    <property type="term" value="F:high-affinity sulfate:proton symporter activity"/>
    <property type="evidence" value="ECO:0007669"/>
    <property type="project" value="TreeGrafter"/>
</dbReference>
<dbReference type="GO" id="GO:0019344">
    <property type="term" value="P:cysteine biosynthetic process"/>
    <property type="evidence" value="ECO:0007669"/>
    <property type="project" value="UniProtKB-UniRule"/>
</dbReference>
<dbReference type="GO" id="GO:0000103">
    <property type="term" value="P:sulfate assimilation"/>
    <property type="evidence" value="ECO:0007669"/>
    <property type="project" value="InterPro"/>
</dbReference>
<dbReference type="HAMAP" id="MF_00468">
    <property type="entry name" value="CysZ"/>
    <property type="match status" value="1"/>
</dbReference>
<dbReference type="InterPro" id="IPR050480">
    <property type="entry name" value="CysZ_sulfate_transptr"/>
</dbReference>
<dbReference type="InterPro" id="IPR022985">
    <property type="entry name" value="Sulfate_CysZ"/>
</dbReference>
<dbReference type="NCBIfam" id="NF003433">
    <property type="entry name" value="PRK04949.1"/>
    <property type="match status" value="1"/>
</dbReference>
<dbReference type="PANTHER" id="PTHR37468">
    <property type="entry name" value="SULFATE TRANSPORTER CYSZ"/>
    <property type="match status" value="1"/>
</dbReference>
<dbReference type="PANTHER" id="PTHR37468:SF1">
    <property type="entry name" value="SULFATE TRANSPORTER CYSZ"/>
    <property type="match status" value="1"/>
</dbReference>
<dbReference type="Pfam" id="PF07264">
    <property type="entry name" value="EI24"/>
    <property type="match status" value="1"/>
</dbReference>
<name>CYSZ_SHIDS</name>
<evidence type="ECO:0000255" key="1">
    <source>
        <dbReference type="HAMAP-Rule" id="MF_00468"/>
    </source>
</evidence>
<protein>
    <recommendedName>
        <fullName evidence="1">Sulfate transporter CysZ</fullName>
    </recommendedName>
</protein>
<keyword id="KW-0028">Amino-acid biosynthesis</keyword>
<keyword id="KW-0997">Cell inner membrane</keyword>
<keyword id="KW-1003">Cell membrane</keyword>
<keyword id="KW-0198">Cysteine biosynthesis</keyword>
<keyword id="KW-0472">Membrane</keyword>
<keyword id="KW-1185">Reference proteome</keyword>
<keyword id="KW-0764">Sulfate transport</keyword>
<keyword id="KW-0812">Transmembrane</keyword>
<keyword id="KW-1133">Transmembrane helix</keyword>
<keyword id="KW-0813">Transport</keyword>
<reference key="1">
    <citation type="journal article" date="2005" name="Nucleic Acids Res.">
        <title>Genome dynamics and diversity of Shigella species, the etiologic agents of bacillary dysentery.</title>
        <authorList>
            <person name="Yang F."/>
            <person name="Yang J."/>
            <person name="Zhang X."/>
            <person name="Chen L."/>
            <person name="Jiang Y."/>
            <person name="Yan Y."/>
            <person name="Tang X."/>
            <person name="Wang J."/>
            <person name="Xiong Z."/>
            <person name="Dong J."/>
            <person name="Xue Y."/>
            <person name="Zhu Y."/>
            <person name="Xu X."/>
            <person name="Sun L."/>
            <person name="Chen S."/>
            <person name="Nie H."/>
            <person name="Peng J."/>
            <person name="Xu J."/>
            <person name="Wang Y."/>
            <person name="Yuan Z."/>
            <person name="Wen Y."/>
            <person name="Yao Z."/>
            <person name="Shen Y."/>
            <person name="Qiang B."/>
            <person name="Hou Y."/>
            <person name="Yu J."/>
            <person name="Jin Q."/>
        </authorList>
    </citation>
    <scope>NUCLEOTIDE SEQUENCE [LARGE SCALE GENOMIC DNA]</scope>
    <source>
        <strain>Sd197</strain>
    </source>
</reference>
<accession>Q32DE0</accession>
<comment type="function">
    <text evidence="1">High affinity, high specificity proton-dependent sulfate transporter, which mediates sulfate uptake. Provides the sulfur source for the cysteine synthesis pathway.</text>
</comment>
<comment type="subcellular location">
    <subcellularLocation>
        <location evidence="1">Cell inner membrane</location>
        <topology evidence="1">Multi-pass membrane protein</topology>
    </subcellularLocation>
</comment>
<comment type="similarity">
    <text evidence="1">Belongs to the CysZ family.</text>
</comment>
<proteinExistence type="inferred from homology"/>
<feature type="chain" id="PRO_1000013718" description="Sulfate transporter CysZ">
    <location>
        <begin position="1"/>
        <end position="253"/>
    </location>
</feature>
<feature type="transmembrane region" description="Helical" evidence="1">
    <location>
        <begin position="31"/>
        <end position="51"/>
    </location>
</feature>
<feature type="transmembrane region" description="Helical" evidence="1">
    <location>
        <begin position="75"/>
        <end position="95"/>
    </location>
</feature>
<feature type="transmembrane region" description="Helical" evidence="1">
    <location>
        <begin position="151"/>
        <end position="171"/>
    </location>
</feature>
<feature type="transmembrane region" description="Helical" evidence="1">
    <location>
        <begin position="222"/>
        <end position="242"/>
    </location>
</feature>